<sequence length="122" mass="13223">MLQELSRLNVADNTGAKIVGVIRNLGGSVKKTSNIGDIVVVSVKKAIPNGMLKEGQVVKALIVRSTYGLRRKNGTHIKFDDNAVVIIKEDGTPRGTRVFGPIAREIREKGYLKIASLAQEVL</sequence>
<comment type="function">
    <text evidence="1">Binds to 23S rRNA. Forms part of two intersubunit bridges in the 70S ribosome.</text>
</comment>
<comment type="subunit">
    <text evidence="1">Part of the 50S ribosomal subunit. Forms a cluster with proteins L3 and L19. In the 70S ribosome, L14 and L19 interact and together make contacts with the 16S rRNA in bridges B5 and B8.</text>
</comment>
<comment type="similarity">
    <text evidence="1">Belongs to the universal ribosomal protein uL14 family.</text>
</comment>
<name>RL14_MESH2</name>
<keyword id="KW-0687">Ribonucleoprotein</keyword>
<keyword id="KW-0689">Ribosomal protein</keyword>
<keyword id="KW-0694">RNA-binding</keyword>
<keyword id="KW-0699">rRNA-binding</keyword>
<dbReference type="EMBL" id="AE017332">
    <property type="protein sequence ID" value="AAV27454.1"/>
    <property type="molecule type" value="Genomic_DNA"/>
</dbReference>
<dbReference type="RefSeq" id="WP_011206035.1">
    <property type="nucleotide sequence ID" value="NC_006360.1"/>
</dbReference>
<dbReference type="SMR" id="Q601K4"/>
<dbReference type="GeneID" id="41334483"/>
<dbReference type="KEGG" id="mhy:mhp198"/>
<dbReference type="eggNOG" id="COG0093">
    <property type="taxonomic scope" value="Bacteria"/>
</dbReference>
<dbReference type="HOGENOM" id="CLU_095071_2_1_14"/>
<dbReference type="PhylomeDB" id="Q601K4"/>
<dbReference type="Proteomes" id="UP000006822">
    <property type="component" value="Chromosome"/>
</dbReference>
<dbReference type="GO" id="GO:0022625">
    <property type="term" value="C:cytosolic large ribosomal subunit"/>
    <property type="evidence" value="ECO:0007669"/>
    <property type="project" value="TreeGrafter"/>
</dbReference>
<dbReference type="GO" id="GO:0070180">
    <property type="term" value="F:large ribosomal subunit rRNA binding"/>
    <property type="evidence" value="ECO:0007669"/>
    <property type="project" value="TreeGrafter"/>
</dbReference>
<dbReference type="GO" id="GO:0003735">
    <property type="term" value="F:structural constituent of ribosome"/>
    <property type="evidence" value="ECO:0007669"/>
    <property type="project" value="InterPro"/>
</dbReference>
<dbReference type="GO" id="GO:0006412">
    <property type="term" value="P:translation"/>
    <property type="evidence" value="ECO:0007669"/>
    <property type="project" value="UniProtKB-UniRule"/>
</dbReference>
<dbReference type="CDD" id="cd00337">
    <property type="entry name" value="Ribosomal_uL14"/>
    <property type="match status" value="1"/>
</dbReference>
<dbReference type="Gene3D" id="2.40.150.20">
    <property type="entry name" value="Ribosomal protein L14"/>
    <property type="match status" value="1"/>
</dbReference>
<dbReference type="HAMAP" id="MF_01367">
    <property type="entry name" value="Ribosomal_uL14"/>
    <property type="match status" value="1"/>
</dbReference>
<dbReference type="InterPro" id="IPR000218">
    <property type="entry name" value="Ribosomal_uL14"/>
</dbReference>
<dbReference type="InterPro" id="IPR005745">
    <property type="entry name" value="Ribosomal_uL14_bac-type"/>
</dbReference>
<dbReference type="InterPro" id="IPR019972">
    <property type="entry name" value="Ribosomal_uL14_CS"/>
</dbReference>
<dbReference type="InterPro" id="IPR036853">
    <property type="entry name" value="Ribosomal_uL14_sf"/>
</dbReference>
<dbReference type="NCBIfam" id="TIGR01067">
    <property type="entry name" value="rplN_bact"/>
    <property type="match status" value="1"/>
</dbReference>
<dbReference type="PANTHER" id="PTHR11761">
    <property type="entry name" value="50S/60S RIBOSOMAL PROTEIN L14/L23"/>
    <property type="match status" value="1"/>
</dbReference>
<dbReference type="PANTHER" id="PTHR11761:SF3">
    <property type="entry name" value="LARGE RIBOSOMAL SUBUNIT PROTEIN UL14M"/>
    <property type="match status" value="1"/>
</dbReference>
<dbReference type="Pfam" id="PF00238">
    <property type="entry name" value="Ribosomal_L14"/>
    <property type="match status" value="1"/>
</dbReference>
<dbReference type="SMART" id="SM01374">
    <property type="entry name" value="Ribosomal_L14"/>
    <property type="match status" value="1"/>
</dbReference>
<dbReference type="SUPFAM" id="SSF50193">
    <property type="entry name" value="Ribosomal protein L14"/>
    <property type="match status" value="1"/>
</dbReference>
<dbReference type="PROSITE" id="PS00049">
    <property type="entry name" value="RIBOSOMAL_L14"/>
    <property type="match status" value="1"/>
</dbReference>
<protein>
    <recommendedName>
        <fullName evidence="1">Large ribosomal subunit protein uL14</fullName>
    </recommendedName>
    <alternativeName>
        <fullName evidence="2">50S ribosomal protein L14</fullName>
    </alternativeName>
</protein>
<evidence type="ECO:0000255" key="1">
    <source>
        <dbReference type="HAMAP-Rule" id="MF_01367"/>
    </source>
</evidence>
<evidence type="ECO:0000305" key="2"/>
<feature type="chain" id="PRO_0000355821" description="Large ribosomal subunit protein uL14">
    <location>
        <begin position="1"/>
        <end position="122"/>
    </location>
</feature>
<organism>
    <name type="scientific">Mesomycoplasma hyopneumoniae (strain 232)</name>
    <name type="common">Mycoplasma hyopneumoniae</name>
    <dbReference type="NCBI Taxonomy" id="295358"/>
    <lineage>
        <taxon>Bacteria</taxon>
        <taxon>Bacillati</taxon>
        <taxon>Mycoplasmatota</taxon>
        <taxon>Mycoplasmoidales</taxon>
        <taxon>Metamycoplasmataceae</taxon>
        <taxon>Mesomycoplasma</taxon>
    </lineage>
</organism>
<gene>
    <name evidence="1" type="primary">rplN</name>
    <name type="ordered locus">mhp198</name>
</gene>
<proteinExistence type="inferred from homology"/>
<reference key="1">
    <citation type="journal article" date="2004" name="J. Bacteriol.">
        <title>The genome sequence of Mycoplasma hyopneumoniae strain 232, the agent of swine mycoplasmosis.</title>
        <authorList>
            <person name="Minion F.C."/>
            <person name="Lefkowitz E.J."/>
            <person name="Madsen M.L."/>
            <person name="Cleary B.J."/>
            <person name="Swartzell S.M."/>
            <person name="Mahairas G.G."/>
        </authorList>
    </citation>
    <scope>NUCLEOTIDE SEQUENCE [LARGE SCALE GENOMIC DNA]</scope>
    <source>
        <strain>232</strain>
    </source>
</reference>
<accession>Q601K4</accession>